<sequence>MKHLPEQDAQVFKAIQLERKRQQDKIELIASENFVSEAVMEAQGSVLTNKYAEGYPGKRYYGGCEHVDVVEDIARDRAKEIFGAEYVNVQPHSGAQANMAVYFTILEHGDTVLGMNLSHGGHLTHGSPVNFSGVQYNFVEYGVDKETQHIDYQDVLEKAREHKPKLIVAGASAYPRQIDFKKFREIADEVGAYFMVDMAHIAGLVAVGLHPNPVPYADFVTTTTHKTLRGPRGGMILCREEFGKKIDKSIFPGIQGGPLMHVISAKAVSFGEVLNGDFKTYAQNVIDNAKQLAETLLSEDIQLVSGGTDNHLVLIDLRSLGITGKIAENVLDEIGITVNKNAIPYDPEKPFVTSGVRVGTAAVTSRGFDQEAMKEVGSIIALALKHHEDEAKLEEAKKRVSDLTARFPLYNELDY</sequence>
<dbReference type="EC" id="2.1.2.1" evidence="1"/>
<dbReference type="EMBL" id="CP000813">
    <property type="protein sequence ID" value="ABV63988.1"/>
    <property type="molecule type" value="Genomic_DNA"/>
</dbReference>
<dbReference type="RefSeq" id="WP_012011552.1">
    <property type="nucleotide sequence ID" value="NZ_VEIC01000001.1"/>
</dbReference>
<dbReference type="SMR" id="A8FIC1"/>
<dbReference type="STRING" id="315750.BPUM_3335"/>
<dbReference type="GeneID" id="5622625"/>
<dbReference type="KEGG" id="bpu:BPUM_3335"/>
<dbReference type="eggNOG" id="COG0112">
    <property type="taxonomic scope" value="Bacteria"/>
</dbReference>
<dbReference type="HOGENOM" id="CLU_022477_2_1_9"/>
<dbReference type="OrthoDB" id="9803846at2"/>
<dbReference type="UniPathway" id="UPA00193"/>
<dbReference type="UniPathway" id="UPA00288">
    <property type="reaction ID" value="UER01023"/>
</dbReference>
<dbReference type="Proteomes" id="UP000001355">
    <property type="component" value="Chromosome"/>
</dbReference>
<dbReference type="GO" id="GO:0005829">
    <property type="term" value="C:cytosol"/>
    <property type="evidence" value="ECO:0007669"/>
    <property type="project" value="TreeGrafter"/>
</dbReference>
<dbReference type="GO" id="GO:0004372">
    <property type="term" value="F:glycine hydroxymethyltransferase activity"/>
    <property type="evidence" value="ECO:0007669"/>
    <property type="project" value="UniProtKB-UniRule"/>
</dbReference>
<dbReference type="GO" id="GO:0030170">
    <property type="term" value="F:pyridoxal phosphate binding"/>
    <property type="evidence" value="ECO:0007669"/>
    <property type="project" value="UniProtKB-UniRule"/>
</dbReference>
<dbReference type="GO" id="GO:0019264">
    <property type="term" value="P:glycine biosynthetic process from serine"/>
    <property type="evidence" value="ECO:0007669"/>
    <property type="project" value="UniProtKB-UniRule"/>
</dbReference>
<dbReference type="GO" id="GO:0035999">
    <property type="term" value="P:tetrahydrofolate interconversion"/>
    <property type="evidence" value="ECO:0007669"/>
    <property type="project" value="UniProtKB-UniRule"/>
</dbReference>
<dbReference type="CDD" id="cd00378">
    <property type="entry name" value="SHMT"/>
    <property type="match status" value="1"/>
</dbReference>
<dbReference type="FunFam" id="3.40.640.10:FF:000001">
    <property type="entry name" value="Serine hydroxymethyltransferase"/>
    <property type="match status" value="1"/>
</dbReference>
<dbReference type="FunFam" id="3.90.1150.10:FF:000003">
    <property type="entry name" value="Serine hydroxymethyltransferase"/>
    <property type="match status" value="1"/>
</dbReference>
<dbReference type="Gene3D" id="3.90.1150.10">
    <property type="entry name" value="Aspartate Aminotransferase, domain 1"/>
    <property type="match status" value="1"/>
</dbReference>
<dbReference type="Gene3D" id="3.40.640.10">
    <property type="entry name" value="Type I PLP-dependent aspartate aminotransferase-like (Major domain)"/>
    <property type="match status" value="1"/>
</dbReference>
<dbReference type="HAMAP" id="MF_00051">
    <property type="entry name" value="SHMT"/>
    <property type="match status" value="1"/>
</dbReference>
<dbReference type="InterPro" id="IPR015424">
    <property type="entry name" value="PyrdxlP-dep_Trfase"/>
</dbReference>
<dbReference type="InterPro" id="IPR015421">
    <property type="entry name" value="PyrdxlP-dep_Trfase_major"/>
</dbReference>
<dbReference type="InterPro" id="IPR015422">
    <property type="entry name" value="PyrdxlP-dep_Trfase_small"/>
</dbReference>
<dbReference type="InterPro" id="IPR001085">
    <property type="entry name" value="Ser_HO-MeTrfase"/>
</dbReference>
<dbReference type="InterPro" id="IPR049943">
    <property type="entry name" value="Ser_HO-MeTrfase-like"/>
</dbReference>
<dbReference type="InterPro" id="IPR019798">
    <property type="entry name" value="Ser_HO-MeTrfase_PLP_BS"/>
</dbReference>
<dbReference type="InterPro" id="IPR039429">
    <property type="entry name" value="SHMT-like_dom"/>
</dbReference>
<dbReference type="NCBIfam" id="NF000586">
    <property type="entry name" value="PRK00011.1"/>
    <property type="match status" value="1"/>
</dbReference>
<dbReference type="PANTHER" id="PTHR11680">
    <property type="entry name" value="SERINE HYDROXYMETHYLTRANSFERASE"/>
    <property type="match status" value="1"/>
</dbReference>
<dbReference type="PANTHER" id="PTHR11680:SF35">
    <property type="entry name" value="SERINE HYDROXYMETHYLTRANSFERASE 1"/>
    <property type="match status" value="1"/>
</dbReference>
<dbReference type="Pfam" id="PF00464">
    <property type="entry name" value="SHMT"/>
    <property type="match status" value="1"/>
</dbReference>
<dbReference type="PIRSF" id="PIRSF000412">
    <property type="entry name" value="SHMT"/>
    <property type="match status" value="1"/>
</dbReference>
<dbReference type="SUPFAM" id="SSF53383">
    <property type="entry name" value="PLP-dependent transferases"/>
    <property type="match status" value="1"/>
</dbReference>
<dbReference type="PROSITE" id="PS00096">
    <property type="entry name" value="SHMT"/>
    <property type="match status" value="1"/>
</dbReference>
<comment type="function">
    <text evidence="1">Catalyzes the reversible interconversion of serine and glycine with tetrahydrofolate (THF) serving as the one-carbon carrier. This reaction serves as the major source of one-carbon groups required for the biosynthesis of purines, thymidylate, methionine, and other important biomolecules. Also exhibits THF-independent aldolase activity toward beta-hydroxyamino acids, producing glycine and aldehydes, via a retro-aldol mechanism.</text>
</comment>
<comment type="catalytic activity">
    <reaction evidence="1">
        <text>(6R)-5,10-methylene-5,6,7,8-tetrahydrofolate + glycine + H2O = (6S)-5,6,7,8-tetrahydrofolate + L-serine</text>
        <dbReference type="Rhea" id="RHEA:15481"/>
        <dbReference type="ChEBI" id="CHEBI:15377"/>
        <dbReference type="ChEBI" id="CHEBI:15636"/>
        <dbReference type="ChEBI" id="CHEBI:33384"/>
        <dbReference type="ChEBI" id="CHEBI:57305"/>
        <dbReference type="ChEBI" id="CHEBI:57453"/>
        <dbReference type="EC" id="2.1.2.1"/>
    </reaction>
</comment>
<comment type="cofactor">
    <cofactor evidence="1">
        <name>pyridoxal 5'-phosphate</name>
        <dbReference type="ChEBI" id="CHEBI:597326"/>
    </cofactor>
</comment>
<comment type="pathway">
    <text evidence="1">One-carbon metabolism; tetrahydrofolate interconversion.</text>
</comment>
<comment type="pathway">
    <text evidence="1">Amino-acid biosynthesis; glycine biosynthesis; glycine from L-serine: step 1/1.</text>
</comment>
<comment type="subunit">
    <text evidence="1">Homodimer.</text>
</comment>
<comment type="subcellular location">
    <subcellularLocation>
        <location evidence="1">Cytoplasm</location>
    </subcellularLocation>
</comment>
<comment type="similarity">
    <text evidence="1">Belongs to the SHMT family.</text>
</comment>
<organism>
    <name type="scientific">Bacillus pumilus (strain SAFR-032)</name>
    <dbReference type="NCBI Taxonomy" id="315750"/>
    <lineage>
        <taxon>Bacteria</taxon>
        <taxon>Bacillati</taxon>
        <taxon>Bacillota</taxon>
        <taxon>Bacilli</taxon>
        <taxon>Bacillales</taxon>
        <taxon>Bacillaceae</taxon>
        <taxon>Bacillus</taxon>
    </lineage>
</organism>
<proteinExistence type="inferred from homology"/>
<name>GLYA_BACP2</name>
<protein>
    <recommendedName>
        <fullName evidence="1">Serine hydroxymethyltransferase</fullName>
        <shortName evidence="1">SHMT</shortName>
        <shortName evidence="1">Serine methylase</shortName>
        <ecNumber evidence="1">2.1.2.1</ecNumber>
    </recommendedName>
</protein>
<gene>
    <name evidence="1" type="primary">glyA</name>
    <name type="ordered locus">BPUM_3335</name>
</gene>
<feature type="chain" id="PRO_1000057364" description="Serine hydroxymethyltransferase">
    <location>
        <begin position="1"/>
        <end position="415"/>
    </location>
</feature>
<feature type="binding site" evidence="1">
    <location>
        <position position="117"/>
    </location>
    <ligand>
        <name>(6S)-5,6,7,8-tetrahydrofolate</name>
        <dbReference type="ChEBI" id="CHEBI:57453"/>
    </ligand>
</feature>
<feature type="binding site" evidence="1">
    <location>
        <begin position="121"/>
        <end position="123"/>
    </location>
    <ligand>
        <name>(6S)-5,6,7,8-tetrahydrofolate</name>
        <dbReference type="ChEBI" id="CHEBI:57453"/>
    </ligand>
</feature>
<feature type="binding site" evidence="1">
    <location>
        <position position="241"/>
    </location>
    <ligand>
        <name>(6S)-5,6,7,8-tetrahydrofolate</name>
        <dbReference type="ChEBI" id="CHEBI:57453"/>
    </ligand>
</feature>
<feature type="site" description="Plays an important role in substrate specificity" evidence="1">
    <location>
        <position position="225"/>
    </location>
</feature>
<feature type="modified residue" description="N6-(pyridoxal phosphate)lysine" evidence="1">
    <location>
        <position position="226"/>
    </location>
</feature>
<keyword id="KW-0028">Amino-acid biosynthesis</keyword>
<keyword id="KW-0963">Cytoplasm</keyword>
<keyword id="KW-0554">One-carbon metabolism</keyword>
<keyword id="KW-0663">Pyridoxal phosphate</keyword>
<keyword id="KW-0808">Transferase</keyword>
<accession>A8FIC1</accession>
<reference key="1">
    <citation type="journal article" date="2007" name="PLoS ONE">
        <title>Paradoxical DNA repair and peroxide resistance gene conservation in Bacillus pumilus SAFR-032.</title>
        <authorList>
            <person name="Gioia J."/>
            <person name="Yerrapragada S."/>
            <person name="Qin X."/>
            <person name="Jiang H."/>
            <person name="Igboeli O.C."/>
            <person name="Muzny D."/>
            <person name="Dugan-Rocha S."/>
            <person name="Ding Y."/>
            <person name="Hawes A."/>
            <person name="Liu W."/>
            <person name="Perez L."/>
            <person name="Kovar C."/>
            <person name="Dinh H."/>
            <person name="Lee S."/>
            <person name="Nazareth L."/>
            <person name="Blyth P."/>
            <person name="Holder M."/>
            <person name="Buhay C."/>
            <person name="Tirumalai M.R."/>
            <person name="Liu Y."/>
            <person name="Dasgupta I."/>
            <person name="Bokhetache L."/>
            <person name="Fujita M."/>
            <person name="Karouia F."/>
            <person name="Eswara Moorthy P."/>
            <person name="Siefert J."/>
            <person name="Uzman A."/>
            <person name="Buzumbo P."/>
            <person name="Verma A."/>
            <person name="Zwiya H."/>
            <person name="McWilliams B.D."/>
            <person name="Olowu A."/>
            <person name="Clinkenbeard K.D."/>
            <person name="Newcombe D."/>
            <person name="Golebiewski L."/>
            <person name="Petrosino J.F."/>
            <person name="Nicholson W.L."/>
            <person name="Fox G.E."/>
            <person name="Venkateswaran K."/>
            <person name="Highlander S.K."/>
            <person name="Weinstock G.M."/>
        </authorList>
    </citation>
    <scope>NUCLEOTIDE SEQUENCE [LARGE SCALE GENOMIC DNA]</scope>
    <source>
        <strain>SAFR-032</strain>
    </source>
</reference>
<evidence type="ECO:0000255" key="1">
    <source>
        <dbReference type="HAMAP-Rule" id="MF_00051"/>
    </source>
</evidence>